<keyword id="KW-0067">ATP-binding</keyword>
<keyword id="KW-0963">Cytoplasm</keyword>
<keyword id="KW-0436">Ligase</keyword>
<keyword id="KW-0460">Magnesium</keyword>
<keyword id="KW-0479">Metal-binding</keyword>
<keyword id="KW-0547">Nucleotide-binding</keyword>
<keyword id="KW-0658">Purine biosynthesis</keyword>
<keyword id="KW-1185">Reference proteome</keyword>
<proteinExistence type="inferred from homology"/>
<comment type="function">
    <text evidence="1">Part of the phosphoribosylformylglycinamidine synthase complex involved in the purines biosynthetic pathway. Catalyzes the ATP-dependent conversion of formylglycinamide ribonucleotide (FGAR) and glutamine to yield formylglycinamidine ribonucleotide (FGAM) and glutamate. The FGAM synthase complex is composed of three subunits. PurQ produces an ammonia molecule by converting glutamine to glutamate. PurL transfers the ammonia molecule to FGAR to form FGAM in an ATP-dependent manner. PurS interacts with PurQ and PurL and is thought to assist in the transfer of the ammonia molecule from PurQ to PurL.</text>
</comment>
<comment type="catalytic activity">
    <reaction evidence="1">
        <text>N(2)-formyl-N(1)-(5-phospho-beta-D-ribosyl)glycinamide + L-glutamine + ATP + H2O = 2-formamido-N(1)-(5-O-phospho-beta-D-ribosyl)acetamidine + L-glutamate + ADP + phosphate + H(+)</text>
        <dbReference type="Rhea" id="RHEA:17129"/>
        <dbReference type="ChEBI" id="CHEBI:15377"/>
        <dbReference type="ChEBI" id="CHEBI:15378"/>
        <dbReference type="ChEBI" id="CHEBI:29985"/>
        <dbReference type="ChEBI" id="CHEBI:30616"/>
        <dbReference type="ChEBI" id="CHEBI:43474"/>
        <dbReference type="ChEBI" id="CHEBI:58359"/>
        <dbReference type="ChEBI" id="CHEBI:147286"/>
        <dbReference type="ChEBI" id="CHEBI:147287"/>
        <dbReference type="ChEBI" id="CHEBI:456216"/>
        <dbReference type="EC" id="6.3.5.3"/>
    </reaction>
</comment>
<comment type="pathway">
    <text evidence="1">Purine metabolism; IMP biosynthesis via de novo pathway; 5-amino-1-(5-phospho-D-ribosyl)imidazole from N(2)-formyl-N(1)-(5-phospho-D-ribosyl)glycinamide: step 1/2.</text>
</comment>
<comment type="subunit">
    <text evidence="1">Monomer. Part of the FGAM synthase complex composed of 1 PurL, 1 PurQ and 2 PurS subunits.</text>
</comment>
<comment type="subcellular location">
    <subcellularLocation>
        <location evidence="1">Cytoplasm</location>
    </subcellularLocation>
</comment>
<comment type="similarity">
    <text evidence="1">Belongs to the FGAMS family.</text>
</comment>
<gene>
    <name evidence="1" type="primary">purL</name>
    <name type="ordered locus">Cgl2588</name>
    <name type="ordered locus">cg2862</name>
</gene>
<accession>Q8NMI5</accession>
<dbReference type="EC" id="6.3.5.3" evidence="1"/>
<dbReference type="EMBL" id="BA000036">
    <property type="protein sequence ID" value="BAB99981.1"/>
    <property type="molecule type" value="Genomic_DNA"/>
</dbReference>
<dbReference type="EMBL" id="BX927155">
    <property type="protein sequence ID" value="CAF21250.1"/>
    <property type="molecule type" value="Genomic_DNA"/>
</dbReference>
<dbReference type="RefSeq" id="NP_601786.1">
    <property type="nucleotide sequence ID" value="NC_003450.3"/>
</dbReference>
<dbReference type="RefSeq" id="WP_011015233.1">
    <property type="nucleotide sequence ID" value="NC_006958.1"/>
</dbReference>
<dbReference type="SMR" id="Q8NMI5"/>
<dbReference type="STRING" id="196627.cg2862"/>
<dbReference type="GeneID" id="1020534"/>
<dbReference type="KEGG" id="cgb:cg2862"/>
<dbReference type="KEGG" id="cgl:Cgl2588"/>
<dbReference type="PATRIC" id="fig|196627.13.peg.2522"/>
<dbReference type="eggNOG" id="COG0046">
    <property type="taxonomic scope" value="Bacteria"/>
</dbReference>
<dbReference type="HOGENOM" id="CLU_003100_0_1_11"/>
<dbReference type="OrthoDB" id="9804441at2"/>
<dbReference type="BioCyc" id="CORYNE:G18NG-12204-MONOMER"/>
<dbReference type="UniPathway" id="UPA00074">
    <property type="reaction ID" value="UER00128"/>
</dbReference>
<dbReference type="Proteomes" id="UP000000582">
    <property type="component" value="Chromosome"/>
</dbReference>
<dbReference type="Proteomes" id="UP000001009">
    <property type="component" value="Chromosome"/>
</dbReference>
<dbReference type="GO" id="GO:0005737">
    <property type="term" value="C:cytoplasm"/>
    <property type="evidence" value="ECO:0007669"/>
    <property type="project" value="UniProtKB-SubCell"/>
</dbReference>
<dbReference type="GO" id="GO:0005524">
    <property type="term" value="F:ATP binding"/>
    <property type="evidence" value="ECO:0007669"/>
    <property type="project" value="UniProtKB-UniRule"/>
</dbReference>
<dbReference type="GO" id="GO:0000287">
    <property type="term" value="F:magnesium ion binding"/>
    <property type="evidence" value="ECO:0007669"/>
    <property type="project" value="UniProtKB-UniRule"/>
</dbReference>
<dbReference type="GO" id="GO:0004642">
    <property type="term" value="F:phosphoribosylformylglycinamidine synthase activity"/>
    <property type="evidence" value="ECO:0007669"/>
    <property type="project" value="UniProtKB-UniRule"/>
</dbReference>
<dbReference type="GO" id="GO:0006189">
    <property type="term" value="P:'de novo' IMP biosynthetic process"/>
    <property type="evidence" value="ECO:0007669"/>
    <property type="project" value="UniProtKB-UniRule"/>
</dbReference>
<dbReference type="CDD" id="cd02203">
    <property type="entry name" value="PurL_repeat1"/>
    <property type="match status" value="1"/>
</dbReference>
<dbReference type="CDD" id="cd02204">
    <property type="entry name" value="PurL_repeat2"/>
    <property type="match status" value="1"/>
</dbReference>
<dbReference type="FunFam" id="3.30.1330.10:FF:000004">
    <property type="entry name" value="Phosphoribosylformylglycinamidine synthase subunit PurL"/>
    <property type="match status" value="1"/>
</dbReference>
<dbReference type="Gene3D" id="3.90.650.10">
    <property type="entry name" value="PurM-like C-terminal domain"/>
    <property type="match status" value="2"/>
</dbReference>
<dbReference type="Gene3D" id="3.30.1330.10">
    <property type="entry name" value="PurM-like, N-terminal domain"/>
    <property type="match status" value="2"/>
</dbReference>
<dbReference type="HAMAP" id="MF_00420">
    <property type="entry name" value="PurL_2"/>
    <property type="match status" value="1"/>
</dbReference>
<dbReference type="InterPro" id="IPR010074">
    <property type="entry name" value="PRibForGlyAmidine_synth_PurL"/>
</dbReference>
<dbReference type="InterPro" id="IPR041609">
    <property type="entry name" value="PurL_linker"/>
</dbReference>
<dbReference type="InterPro" id="IPR010918">
    <property type="entry name" value="PurM-like_C_dom"/>
</dbReference>
<dbReference type="InterPro" id="IPR036676">
    <property type="entry name" value="PurM-like_C_sf"/>
</dbReference>
<dbReference type="InterPro" id="IPR016188">
    <property type="entry name" value="PurM-like_N"/>
</dbReference>
<dbReference type="InterPro" id="IPR036921">
    <property type="entry name" value="PurM-like_N_sf"/>
</dbReference>
<dbReference type="NCBIfam" id="TIGR01736">
    <property type="entry name" value="FGAM_synth_II"/>
    <property type="match status" value="1"/>
</dbReference>
<dbReference type="NCBIfam" id="NF002290">
    <property type="entry name" value="PRK01213.1"/>
    <property type="match status" value="1"/>
</dbReference>
<dbReference type="PANTHER" id="PTHR43555">
    <property type="entry name" value="PHOSPHORIBOSYLFORMYLGLYCINAMIDINE SYNTHASE SUBUNIT PURL"/>
    <property type="match status" value="1"/>
</dbReference>
<dbReference type="PANTHER" id="PTHR43555:SF1">
    <property type="entry name" value="PHOSPHORIBOSYLFORMYLGLYCINAMIDINE SYNTHASE SUBUNIT PURL"/>
    <property type="match status" value="1"/>
</dbReference>
<dbReference type="Pfam" id="PF00586">
    <property type="entry name" value="AIRS"/>
    <property type="match status" value="2"/>
</dbReference>
<dbReference type="Pfam" id="PF02769">
    <property type="entry name" value="AIRS_C"/>
    <property type="match status" value="2"/>
</dbReference>
<dbReference type="Pfam" id="PF18072">
    <property type="entry name" value="FGAR-AT_linker"/>
    <property type="match status" value="1"/>
</dbReference>
<dbReference type="PIRSF" id="PIRSF001587">
    <property type="entry name" value="FGAM_synthase_II"/>
    <property type="match status" value="1"/>
</dbReference>
<dbReference type="SUPFAM" id="SSF56042">
    <property type="entry name" value="PurM C-terminal domain-like"/>
    <property type="match status" value="2"/>
</dbReference>
<dbReference type="SUPFAM" id="SSF55326">
    <property type="entry name" value="PurM N-terminal domain-like"/>
    <property type="match status" value="2"/>
</dbReference>
<reference key="1">
    <citation type="journal article" date="2003" name="Appl. Microbiol. Biotechnol.">
        <title>The Corynebacterium glutamicum genome: features and impacts on biotechnological processes.</title>
        <authorList>
            <person name="Ikeda M."/>
            <person name="Nakagawa S."/>
        </authorList>
    </citation>
    <scope>NUCLEOTIDE SEQUENCE [LARGE SCALE GENOMIC DNA]</scope>
    <source>
        <strain>ATCC 13032 / DSM 20300 / JCM 1318 / BCRC 11384 / CCUG 27702 / LMG 3730 / NBRC 12168 / NCIMB 10025 / NRRL B-2784 / 534</strain>
    </source>
</reference>
<reference key="2">
    <citation type="journal article" date="2003" name="J. Biotechnol.">
        <title>The complete Corynebacterium glutamicum ATCC 13032 genome sequence and its impact on the production of L-aspartate-derived amino acids and vitamins.</title>
        <authorList>
            <person name="Kalinowski J."/>
            <person name="Bathe B."/>
            <person name="Bartels D."/>
            <person name="Bischoff N."/>
            <person name="Bott M."/>
            <person name="Burkovski A."/>
            <person name="Dusch N."/>
            <person name="Eggeling L."/>
            <person name="Eikmanns B.J."/>
            <person name="Gaigalat L."/>
            <person name="Goesmann A."/>
            <person name="Hartmann M."/>
            <person name="Huthmacher K."/>
            <person name="Kraemer R."/>
            <person name="Linke B."/>
            <person name="McHardy A.C."/>
            <person name="Meyer F."/>
            <person name="Moeckel B."/>
            <person name="Pfefferle W."/>
            <person name="Puehler A."/>
            <person name="Rey D.A."/>
            <person name="Rueckert C."/>
            <person name="Rupp O."/>
            <person name="Sahm H."/>
            <person name="Wendisch V.F."/>
            <person name="Wiegraebe I."/>
            <person name="Tauch A."/>
        </authorList>
    </citation>
    <scope>NUCLEOTIDE SEQUENCE [LARGE SCALE GENOMIC DNA]</scope>
    <source>
        <strain>ATCC 13032 / DSM 20300 / JCM 1318 / BCRC 11384 / CCUG 27702 / LMG 3730 / NBRC 12168 / NCIMB 10025 / NRRL B-2784 / 534</strain>
    </source>
</reference>
<protein>
    <recommendedName>
        <fullName evidence="1">Phosphoribosylformylglycinamidine synthase subunit PurL</fullName>
        <shortName evidence="1">FGAM synthase</shortName>
        <ecNumber evidence="1">6.3.5.3</ecNumber>
    </recommendedName>
    <alternativeName>
        <fullName evidence="1">Formylglycinamide ribonucleotide amidotransferase subunit II</fullName>
        <shortName evidence="1">FGAR amidotransferase II</shortName>
        <shortName evidence="1">FGAR-AT II</shortName>
    </alternativeName>
    <alternativeName>
        <fullName evidence="1">Glutamine amidotransferase PurL</fullName>
    </alternativeName>
    <alternativeName>
        <fullName evidence="1">Phosphoribosylformylglycinamidine synthase subunit II</fullName>
    </alternativeName>
</protein>
<feature type="chain" id="PRO_0000100452" description="Phosphoribosylformylglycinamidine synthase subunit PurL">
    <location>
        <begin position="1"/>
        <end position="762"/>
    </location>
</feature>
<feature type="active site" evidence="1">
    <location>
        <position position="58"/>
    </location>
</feature>
<feature type="active site" description="Proton acceptor" evidence="1">
    <location>
        <position position="109"/>
    </location>
</feature>
<feature type="binding site" evidence="1">
    <location>
        <position position="61"/>
    </location>
    <ligand>
        <name>ATP</name>
        <dbReference type="ChEBI" id="CHEBI:30616"/>
    </ligand>
</feature>
<feature type="binding site" evidence="1">
    <location>
        <position position="105"/>
    </location>
    <ligand>
        <name>ATP</name>
        <dbReference type="ChEBI" id="CHEBI:30616"/>
    </ligand>
</feature>
<feature type="binding site" evidence="1">
    <location>
        <position position="107"/>
    </location>
    <ligand>
        <name>Mg(2+)</name>
        <dbReference type="ChEBI" id="CHEBI:18420"/>
        <label>1</label>
    </ligand>
</feature>
<feature type="binding site" evidence="1">
    <location>
        <begin position="108"/>
        <end position="111"/>
    </location>
    <ligand>
        <name>substrate</name>
    </ligand>
</feature>
<feature type="binding site" evidence="1">
    <location>
        <position position="130"/>
    </location>
    <ligand>
        <name>substrate</name>
    </ligand>
</feature>
<feature type="binding site" evidence="1">
    <location>
        <position position="131"/>
    </location>
    <ligand>
        <name>Mg(2+)</name>
        <dbReference type="ChEBI" id="CHEBI:18420"/>
        <label>2</label>
    </ligand>
</feature>
<feature type="binding site" evidence="1">
    <location>
        <position position="255"/>
    </location>
    <ligand>
        <name>substrate</name>
    </ligand>
</feature>
<feature type="binding site" evidence="1">
    <location>
        <position position="283"/>
    </location>
    <ligand>
        <name>Mg(2+)</name>
        <dbReference type="ChEBI" id="CHEBI:18420"/>
        <label>2</label>
    </ligand>
</feature>
<feature type="binding site" evidence="1">
    <location>
        <begin position="327"/>
        <end position="329"/>
    </location>
    <ligand>
        <name>substrate</name>
    </ligand>
</feature>
<feature type="binding site" evidence="1">
    <location>
        <position position="513"/>
    </location>
    <ligand>
        <name>ATP</name>
        <dbReference type="ChEBI" id="CHEBI:30616"/>
    </ligand>
</feature>
<feature type="binding site" evidence="1">
    <location>
        <position position="550"/>
    </location>
    <ligand>
        <name>ATP</name>
        <dbReference type="ChEBI" id="CHEBI:30616"/>
    </ligand>
</feature>
<feature type="binding site" evidence="1">
    <location>
        <position position="551"/>
    </location>
    <ligand>
        <name>Mg(2+)</name>
        <dbReference type="ChEBI" id="CHEBI:18420"/>
        <label>1</label>
    </ligand>
</feature>
<feature type="binding site" evidence="1">
    <location>
        <position position="553"/>
    </location>
    <ligand>
        <name>substrate</name>
    </ligand>
</feature>
<evidence type="ECO:0000255" key="1">
    <source>
        <dbReference type="HAMAP-Rule" id="MF_00420"/>
    </source>
</evidence>
<organism>
    <name type="scientific">Corynebacterium glutamicum (strain ATCC 13032 / DSM 20300 / JCM 1318 / BCRC 11384 / CCUG 27702 / LMG 3730 / NBRC 12168 / NCIMB 10025 / NRRL B-2784 / 534)</name>
    <dbReference type="NCBI Taxonomy" id="196627"/>
    <lineage>
        <taxon>Bacteria</taxon>
        <taxon>Bacillati</taxon>
        <taxon>Actinomycetota</taxon>
        <taxon>Actinomycetes</taxon>
        <taxon>Mycobacteriales</taxon>
        <taxon>Corynebacteriaceae</taxon>
        <taxon>Corynebacterium</taxon>
    </lineage>
</organism>
<sequence length="762" mass="80842">MSTFVNDTVEDAIKTPELDQPFEALGLKDDEYARIKEILGRRPTDAELTVYSVMWSEHCSYKSSKVHLRYFGETTTEEMASKILAGIGENAGVVDIGDGNAVTFRVESHNHPSFVEPHQGAATGVGGIVRDIMAMGARPIAVMDQLRFGALDNPDTQRVLPGVVDGISHYGNCLGLPNIGGETVFDDSYAGNPLVNALCVGTLKVEDLKLAFASGTGNKVILFGSRTGLDGIGGVSVLGSASFEEGEERKLPAVQVGDPFAEKVLIECCLELYKAGVVVGIQDLGGGGLACATSELAAAGDGGMRVNLDNVPLRAENMSAAEILASESQERMCAVVTPENVERFLEICAKWDVTCAEIGEVTDEKDRYVVVHNGEVVIDAPPSTIDEGPVYNRPVARPENQDELQLEGEIARPVDVEEIKAAWLKLVASPALASRAFITEQYDRYVRGNTVQAKNANAGVLRIDEETNRGVAISADASGRYTKLEPNTGAQLALAEAYRNVVSTGARPVAVTNCLNFGSPENAGVMWQFKEAVHGLADGSKLLGIPVSGGNVSFYNQTGDEPILPTPVVGVLGVLDNVEQSIGNVLPSEDNDLYLLGETFDEFGGSIWQQVSGAGLNGLPPVVDLLNEQRLADLFVGSDLFAASHDLSEGGLGQTLAELAIHADKGMDVDLSQIHPSLFTSLFAESASRIVVATNRGEELEKRAAELGVPVFKLGCTNDSAVIAVKGADVEFTVSVEELREAWTNTLPEAFGHAVGANAVVA</sequence>
<name>PURL_CORGL</name>